<accession>B1JJF6</accession>
<sequence length="349" mass="39148">MDMENLTWLHGKPTASGILKANPEDFVVVEDLGFEPDGEGEHLLVRIRKNGCNTQFVADYLARFAKLHPRLVSYAGLKDRHAVTEQWFCLHLPGKEAPDLATFELEGCEVLEAVRHKRKLRIGSLKGNAFTLVLRHITDRQDVEQRLQQIAAQGVPNYFGSQRFGRGGNNLVQARLWANNEIRVKERSKRSFYLSASRSAMFNLISSHRLAQQLSTTVLEGDALQLSGRGSWFVAQADELATLQQRVTAGELNITAPLPGDSELGTHGEALAFEQACLAEQTELLSLIKRERVEGSRRAVLLKPQNMISNWWDDVTLELSFWLPAGSFATSVVREIMNQDRADDTDIIE</sequence>
<name>TRUD_YERPY</name>
<keyword id="KW-0413">Isomerase</keyword>
<keyword id="KW-0819">tRNA processing</keyword>
<reference key="1">
    <citation type="submission" date="2008-02" db="EMBL/GenBank/DDBJ databases">
        <title>Complete sequence of Yersinia pseudotuberculosis YPIII.</title>
        <authorList>
            <consortium name="US DOE Joint Genome Institute"/>
            <person name="Copeland A."/>
            <person name="Lucas S."/>
            <person name="Lapidus A."/>
            <person name="Glavina del Rio T."/>
            <person name="Dalin E."/>
            <person name="Tice H."/>
            <person name="Bruce D."/>
            <person name="Goodwin L."/>
            <person name="Pitluck S."/>
            <person name="Munk A.C."/>
            <person name="Brettin T."/>
            <person name="Detter J.C."/>
            <person name="Han C."/>
            <person name="Tapia R."/>
            <person name="Schmutz J."/>
            <person name="Larimer F."/>
            <person name="Land M."/>
            <person name="Hauser L."/>
            <person name="Challacombe J.F."/>
            <person name="Green L."/>
            <person name="Lindler L.E."/>
            <person name="Nikolich M.P."/>
            <person name="Richardson P."/>
        </authorList>
    </citation>
    <scope>NUCLEOTIDE SEQUENCE [LARGE SCALE GENOMIC DNA]</scope>
    <source>
        <strain>YPIII</strain>
    </source>
</reference>
<protein>
    <recommendedName>
        <fullName evidence="1">tRNA pseudouridine synthase D</fullName>
        <ecNumber evidence="1">5.4.99.27</ecNumber>
    </recommendedName>
    <alternativeName>
        <fullName evidence="1">tRNA pseudouridine(13) synthase</fullName>
    </alternativeName>
    <alternativeName>
        <fullName evidence="1">tRNA pseudouridylate synthase D</fullName>
    </alternativeName>
    <alternativeName>
        <fullName evidence="1">tRNA-uridine isomerase D</fullName>
    </alternativeName>
</protein>
<proteinExistence type="inferred from homology"/>
<organism>
    <name type="scientific">Yersinia pseudotuberculosis serotype O:3 (strain YPIII)</name>
    <dbReference type="NCBI Taxonomy" id="502800"/>
    <lineage>
        <taxon>Bacteria</taxon>
        <taxon>Pseudomonadati</taxon>
        <taxon>Pseudomonadota</taxon>
        <taxon>Gammaproteobacteria</taxon>
        <taxon>Enterobacterales</taxon>
        <taxon>Yersiniaceae</taxon>
        <taxon>Yersinia</taxon>
    </lineage>
</organism>
<feature type="chain" id="PRO_1000136862" description="tRNA pseudouridine synthase D">
    <location>
        <begin position="1"/>
        <end position="349"/>
    </location>
</feature>
<feature type="domain" description="TRUD" evidence="1">
    <location>
        <begin position="154"/>
        <end position="302"/>
    </location>
</feature>
<feature type="active site" description="Nucleophile" evidence="1">
    <location>
        <position position="79"/>
    </location>
</feature>
<feature type="binding site" evidence="1">
    <location>
        <position position="26"/>
    </location>
    <ligand>
        <name>substrate</name>
    </ligand>
</feature>
<feature type="binding site" evidence="1">
    <location>
        <position position="128"/>
    </location>
    <ligand>
        <name>substrate</name>
    </ligand>
</feature>
<feature type="binding site" evidence="1">
    <location>
        <position position="328"/>
    </location>
    <ligand>
        <name>substrate</name>
    </ligand>
</feature>
<evidence type="ECO:0000255" key="1">
    <source>
        <dbReference type="HAMAP-Rule" id="MF_01082"/>
    </source>
</evidence>
<gene>
    <name evidence="1" type="primary">truD</name>
    <name type="ordered locus">YPK_3429</name>
</gene>
<dbReference type="EC" id="5.4.99.27" evidence="1"/>
<dbReference type="EMBL" id="CP000950">
    <property type="protein sequence ID" value="ACA69696.1"/>
    <property type="molecule type" value="Genomic_DNA"/>
</dbReference>
<dbReference type="RefSeq" id="WP_011191777.1">
    <property type="nucleotide sequence ID" value="NZ_CP009792.1"/>
</dbReference>
<dbReference type="SMR" id="B1JJF6"/>
<dbReference type="KEGG" id="ypy:YPK_3429"/>
<dbReference type="PATRIC" id="fig|502800.11.peg.4167"/>
<dbReference type="GO" id="GO:0005829">
    <property type="term" value="C:cytosol"/>
    <property type="evidence" value="ECO:0007669"/>
    <property type="project" value="TreeGrafter"/>
</dbReference>
<dbReference type="GO" id="GO:0003723">
    <property type="term" value="F:RNA binding"/>
    <property type="evidence" value="ECO:0007669"/>
    <property type="project" value="InterPro"/>
</dbReference>
<dbReference type="GO" id="GO:0160150">
    <property type="term" value="F:tRNA pseudouridine(13) synthase activity"/>
    <property type="evidence" value="ECO:0007669"/>
    <property type="project" value="UniProtKB-EC"/>
</dbReference>
<dbReference type="GO" id="GO:0031119">
    <property type="term" value="P:tRNA pseudouridine synthesis"/>
    <property type="evidence" value="ECO:0007669"/>
    <property type="project" value="UniProtKB-UniRule"/>
</dbReference>
<dbReference type="CDD" id="cd02575">
    <property type="entry name" value="PseudoU_synth_EcTruD"/>
    <property type="match status" value="1"/>
</dbReference>
<dbReference type="FunFam" id="3.30.2340.10:FF:000001">
    <property type="entry name" value="tRNA pseudouridine synthase D"/>
    <property type="match status" value="1"/>
</dbReference>
<dbReference type="FunFam" id="3.30.2350.20:FF:000001">
    <property type="entry name" value="tRNA pseudouridine synthase D"/>
    <property type="match status" value="1"/>
</dbReference>
<dbReference type="Gene3D" id="3.30.2350.20">
    <property type="entry name" value="TruD, catalytic domain"/>
    <property type="match status" value="1"/>
</dbReference>
<dbReference type="Gene3D" id="3.30.2340.10">
    <property type="entry name" value="TruD, insertion domain"/>
    <property type="match status" value="1"/>
</dbReference>
<dbReference type="HAMAP" id="MF_01082">
    <property type="entry name" value="TruD"/>
    <property type="match status" value="1"/>
</dbReference>
<dbReference type="InterPro" id="IPR020103">
    <property type="entry name" value="PsdUridine_synth_cat_dom_sf"/>
</dbReference>
<dbReference type="InterPro" id="IPR001656">
    <property type="entry name" value="PsdUridine_synth_TruD"/>
</dbReference>
<dbReference type="InterPro" id="IPR020119">
    <property type="entry name" value="PsdUridine_synth_TruD_CS"/>
</dbReference>
<dbReference type="InterPro" id="IPR011760">
    <property type="entry name" value="PsdUridine_synth_TruD_insert"/>
</dbReference>
<dbReference type="InterPro" id="IPR042214">
    <property type="entry name" value="TruD_catalytic"/>
</dbReference>
<dbReference type="InterPro" id="IPR043165">
    <property type="entry name" value="TruD_insert_sf"/>
</dbReference>
<dbReference type="InterPro" id="IPR050170">
    <property type="entry name" value="TruD_pseudoU_synthase"/>
</dbReference>
<dbReference type="NCBIfam" id="NF002155">
    <property type="entry name" value="PRK00984.1-4"/>
    <property type="match status" value="1"/>
</dbReference>
<dbReference type="NCBIfam" id="TIGR00094">
    <property type="entry name" value="tRNA_TruD_broad"/>
    <property type="match status" value="1"/>
</dbReference>
<dbReference type="PANTHER" id="PTHR47811">
    <property type="entry name" value="TRNA PSEUDOURIDINE SYNTHASE D"/>
    <property type="match status" value="1"/>
</dbReference>
<dbReference type="PANTHER" id="PTHR47811:SF1">
    <property type="entry name" value="TRNA PSEUDOURIDINE SYNTHASE D"/>
    <property type="match status" value="1"/>
</dbReference>
<dbReference type="Pfam" id="PF01142">
    <property type="entry name" value="TruD"/>
    <property type="match status" value="2"/>
</dbReference>
<dbReference type="SUPFAM" id="SSF55120">
    <property type="entry name" value="Pseudouridine synthase"/>
    <property type="match status" value="1"/>
</dbReference>
<dbReference type="PROSITE" id="PS50984">
    <property type="entry name" value="TRUD"/>
    <property type="match status" value="1"/>
</dbReference>
<dbReference type="PROSITE" id="PS01268">
    <property type="entry name" value="UPF0024"/>
    <property type="match status" value="1"/>
</dbReference>
<comment type="function">
    <text evidence="1">Responsible for synthesis of pseudouridine from uracil-13 in transfer RNAs.</text>
</comment>
<comment type="catalytic activity">
    <reaction evidence="1">
        <text>uridine(13) in tRNA = pseudouridine(13) in tRNA</text>
        <dbReference type="Rhea" id="RHEA:42540"/>
        <dbReference type="Rhea" id="RHEA-COMP:10105"/>
        <dbReference type="Rhea" id="RHEA-COMP:10106"/>
        <dbReference type="ChEBI" id="CHEBI:65314"/>
        <dbReference type="ChEBI" id="CHEBI:65315"/>
        <dbReference type="EC" id="5.4.99.27"/>
    </reaction>
</comment>
<comment type="similarity">
    <text evidence="1">Belongs to the pseudouridine synthase TruD family.</text>
</comment>